<gene>
    <name type="ordered locus">Lm4b_01938</name>
</gene>
<protein>
    <recommendedName>
        <fullName evidence="1">UPF0302 protein Lm4b_01938</fullName>
    </recommendedName>
</protein>
<dbReference type="EMBL" id="FM242711">
    <property type="protein sequence ID" value="CAS05696.1"/>
    <property type="molecule type" value="Genomic_DNA"/>
</dbReference>
<dbReference type="SMR" id="C1KWM1"/>
<dbReference type="KEGG" id="lmc:Lm4b_01938"/>
<dbReference type="HOGENOM" id="CLU_126019_0_0_9"/>
<dbReference type="Gene3D" id="3.40.1530.30">
    <property type="entry name" value="Uncharacterised family UPF0302, N-terminal domain"/>
    <property type="match status" value="1"/>
</dbReference>
<dbReference type="Gene3D" id="4.10.810.10">
    <property type="entry name" value="Virus Scaffolding Protein, Chain A"/>
    <property type="match status" value="1"/>
</dbReference>
<dbReference type="HAMAP" id="MF_00760">
    <property type="entry name" value="UPF0302"/>
    <property type="match status" value="1"/>
</dbReference>
<dbReference type="InterPro" id="IPR014957">
    <property type="entry name" value="IDEAL_dom"/>
</dbReference>
<dbReference type="InterPro" id="IPR011188">
    <property type="entry name" value="UPF0302"/>
</dbReference>
<dbReference type="InterPro" id="IPR014963">
    <property type="entry name" value="UPF0302_N"/>
</dbReference>
<dbReference type="InterPro" id="IPR038091">
    <property type="entry name" value="UPF0302_N_sf"/>
</dbReference>
<dbReference type="InterPro" id="IPR027393">
    <property type="entry name" value="Virus_scaffolding_prot_C"/>
</dbReference>
<dbReference type="NCBIfam" id="NF002965">
    <property type="entry name" value="PRK03636.1"/>
    <property type="match status" value="1"/>
</dbReference>
<dbReference type="Pfam" id="PF08858">
    <property type="entry name" value="IDEAL"/>
    <property type="match status" value="1"/>
</dbReference>
<dbReference type="Pfam" id="PF08864">
    <property type="entry name" value="UPF0302"/>
    <property type="match status" value="1"/>
</dbReference>
<dbReference type="PIRSF" id="PIRSF007165">
    <property type="entry name" value="UCP007165"/>
    <property type="match status" value="1"/>
</dbReference>
<dbReference type="SMART" id="SM00914">
    <property type="entry name" value="IDEAL"/>
    <property type="match status" value="1"/>
</dbReference>
<organism>
    <name type="scientific">Listeria monocytogenes serotype 4b (strain CLIP80459)</name>
    <dbReference type="NCBI Taxonomy" id="568819"/>
    <lineage>
        <taxon>Bacteria</taxon>
        <taxon>Bacillati</taxon>
        <taxon>Bacillota</taxon>
        <taxon>Bacilli</taxon>
        <taxon>Bacillales</taxon>
        <taxon>Listeriaceae</taxon>
        <taxon>Listeria</taxon>
    </lineage>
</organism>
<name>Y1938_LISMC</name>
<proteinExistence type="inferred from homology"/>
<accession>C1KWM1</accession>
<feature type="chain" id="PRO_1000212880" description="UPF0302 protein Lm4b_01938">
    <location>
        <begin position="1"/>
        <end position="181"/>
    </location>
</feature>
<evidence type="ECO:0000255" key="1">
    <source>
        <dbReference type="HAMAP-Rule" id="MF_00760"/>
    </source>
</evidence>
<comment type="similarity">
    <text evidence="1">Belongs to the UPF0302 family.</text>
</comment>
<sequence>MKASISIDEKKDFIRWFLNKHQMKTREAMWVLNYIAGHDQIVKYVHFVDNLEGCARGLSLSAHGVESEPFLFFKGNIMTTDPEKAFHDIRLNWDEELYVELHFEEAMSSPEYALVREDNPFTAVKLADEEKEMADALIYQSVHQFSREKVLQQIDEALDTRDEAAFHKLVRILQQMDTEKE</sequence>
<reference key="1">
    <citation type="journal article" date="2012" name="BMC Genomics">
        <title>Comparative genomics and transcriptomics of lineages I, II, and III strains of Listeria monocytogenes.</title>
        <authorList>
            <person name="Hain T."/>
            <person name="Ghai R."/>
            <person name="Billion A."/>
            <person name="Kuenne C.T."/>
            <person name="Steinweg C."/>
            <person name="Izar B."/>
            <person name="Mohamed W."/>
            <person name="Mraheil M."/>
            <person name="Domann E."/>
            <person name="Schaffrath S."/>
            <person name="Karst U."/>
            <person name="Goesmann A."/>
            <person name="Oehm S."/>
            <person name="Puhler A."/>
            <person name="Merkl R."/>
            <person name="Vorwerk S."/>
            <person name="Glaser P."/>
            <person name="Garrido P."/>
            <person name="Rusniok C."/>
            <person name="Buchrieser C."/>
            <person name="Goebel W."/>
            <person name="Chakraborty T."/>
        </authorList>
    </citation>
    <scope>NUCLEOTIDE SEQUENCE [LARGE SCALE GENOMIC DNA]</scope>
    <source>
        <strain>CLIP80459</strain>
    </source>
</reference>